<feature type="signal peptide" evidence="6">
    <location>
        <begin position="1"/>
        <end position="23"/>
    </location>
</feature>
<feature type="chain" id="PRO_0000005156" description="C-C motif chemokine 3">
    <location>
        <begin position="24"/>
        <end position="92"/>
    </location>
</feature>
<feature type="chain" id="PRO_0000005157" description="MIP-1-alpha(4-69)">
    <location>
        <begin position="27"/>
        <end position="92"/>
    </location>
</feature>
<feature type="site" description="Involved in GAG binding">
    <location>
        <position position="40"/>
    </location>
</feature>
<feature type="site" description="Involved in GAG binding">
    <location>
        <position position="68"/>
    </location>
</feature>
<feature type="site" description="Involved in GAG binding">
    <location>
        <position position="70"/>
    </location>
</feature>
<feature type="disulfide bond" evidence="4 9">
    <location>
        <begin position="33"/>
        <end position="57"/>
    </location>
</feature>
<feature type="disulfide bond" evidence="4 9">
    <location>
        <begin position="34"/>
        <end position="73"/>
    </location>
</feature>
<feature type="sequence variant" id="VAR_048701" description="In dbSNP:rs34171309.">
    <original>E</original>
    <variation>D</variation>
    <location>
        <position position="78"/>
    </location>
</feature>
<feature type="mutagenesis site" description="Slightly reduces heparin binding." evidence="7">
    <original>R</original>
    <variation>A</variation>
    <location>
        <position position="40"/>
    </location>
</feature>
<feature type="mutagenesis site" description="Reduces self-association; in BB-10010: Improved pharmaceutical properties." evidence="1 6">
    <original>D</original>
    <variation>A</variation>
    <location>
        <position position="49"/>
    </location>
</feature>
<feature type="mutagenesis site" description="Strongly reduces heparin binding." evidence="7">
    <original>R</original>
    <variation>A</variation>
    <location>
        <position position="68"/>
    </location>
</feature>
<feature type="mutagenesis site" description="Reduces heparin binding." evidence="7">
    <original>R</original>
    <variation>A</variation>
    <location>
        <position position="70"/>
    </location>
</feature>
<feature type="mutagenesis site" description="Reduces self-association." evidence="1">
    <original>E</original>
    <variation>A</variation>
    <location>
        <position position="89"/>
    </location>
</feature>
<feature type="helix" evidence="11">
    <location>
        <begin position="26"/>
        <end position="28"/>
    </location>
</feature>
<feature type="strand" evidence="10">
    <location>
        <begin position="31"/>
        <end position="33"/>
    </location>
</feature>
<feature type="helix" evidence="11">
    <location>
        <begin position="44"/>
        <end position="46"/>
    </location>
</feature>
<feature type="strand" evidence="11">
    <location>
        <begin position="47"/>
        <end position="52"/>
    </location>
</feature>
<feature type="strand" evidence="11">
    <location>
        <begin position="57"/>
        <end position="59"/>
    </location>
</feature>
<feature type="strand" evidence="11">
    <location>
        <begin position="62"/>
        <end position="66"/>
    </location>
</feature>
<feature type="strand" evidence="13">
    <location>
        <begin position="67"/>
        <end position="69"/>
    </location>
</feature>
<feature type="strand" evidence="11">
    <location>
        <begin position="71"/>
        <end position="74"/>
    </location>
</feature>
<feature type="strand" evidence="12">
    <location>
        <begin position="76"/>
        <end position="78"/>
    </location>
</feature>
<feature type="helix" evidence="11">
    <location>
        <begin position="79"/>
        <end position="87"/>
    </location>
</feature>
<dbReference type="EMBL" id="D00044">
    <property type="protein sequence ID" value="BAA00029.1"/>
    <property type="molecule type" value="mRNA"/>
</dbReference>
<dbReference type="EMBL" id="X03754">
    <property type="protein sequence ID" value="CAA27388.1"/>
    <property type="molecule type" value="mRNA"/>
</dbReference>
<dbReference type="EMBL" id="X04018">
    <property type="protein sequence ID" value="CAA27643.1"/>
    <property type="status" value="ALT_SEQ"/>
    <property type="molecule type" value="Genomic_DNA"/>
</dbReference>
<dbReference type="EMBL" id="M25315">
    <property type="protein sequence ID" value="AAA57255.1"/>
    <property type="molecule type" value="mRNA"/>
</dbReference>
<dbReference type="EMBL" id="M23452">
    <property type="protein sequence ID" value="AAA36316.1"/>
    <property type="molecule type" value="mRNA"/>
</dbReference>
<dbReference type="EMBL" id="M23178">
    <property type="protein sequence ID" value="AAA35858.1"/>
    <property type="molecule type" value="Genomic_DNA"/>
</dbReference>
<dbReference type="EMBL" id="D90144">
    <property type="protein sequence ID" value="BAA14172.1"/>
    <property type="molecule type" value="Genomic_DNA"/>
</dbReference>
<dbReference type="EMBL" id="BC071834">
    <property type="protein sequence ID" value="AAH71834.1"/>
    <property type="molecule type" value="mRNA"/>
</dbReference>
<dbReference type="EMBL" id="AF043339">
    <property type="protein sequence ID" value="AAC03539.1"/>
    <property type="molecule type" value="mRNA"/>
</dbReference>
<dbReference type="CCDS" id="CCDS11307.1"/>
<dbReference type="PIR" id="A35673">
    <property type="entry name" value="A30574"/>
</dbReference>
<dbReference type="RefSeq" id="NP_002974.1">
    <property type="nucleotide sequence ID" value="NM_002983.3"/>
</dbReference>
<dbReference type="PDB" id="1B50">
    <property type="method" value="NMR"/>
    <property type="chains" value="A/B=24-92"/>
</dbReference>
<dbReference type="PDB" id="1B53">
    <property type="method" value="NMR"/>
    <property type="chains" value="A/B=24-92"/>
</dbReference>
<dbReference type="PDB" id="2X69">
    <property type="method" value="X-ray"/>
    <property type="resolution" value="2.65 A"/>
    <property type="chains" value="A/B/C/D/E=23-92"/>
</dbReference>
<dbReference type="PDB" id="2X6G">
    <property type="method" value="X-ray"/>
    <property type="resolution" value="2.18 A"/>
    <property type="chains" value="A/B/C/D/E/F/G/H/I/J/K/L/M/N/O/P/Q/R=23-92"/>
</dbReference>
<dbReference type="PDB" id="3FPU">
    <property type="method" value="X-ray"/>
    <property type="resolution" value="1.76 A"/>
    <property type="chains" value="B=24-92"/>
</dbReference>
<dbReference type="PDB" id="3H44">
    <property type="method" value="X-ray"/>
    <property type="resolution" value="3.00 A"/>
    <property type="chains" value="C/D=23-92"/>
</dbReference>
<dbReference type="PDB" id="3KBX">
    <property type="method" value="X-ray"/>
    <property type="resolution" value="2.65 A"/>
    <property type="chains" value="A/B/C/D/E=23-92"/>
</dbReference>
<dbReference type="PDB" id="4RA8">
    <property type="method" value="X-ray"/>
    <property type="resolution" value="2.60 A"/>
    <property type="chains" value="A/B/C/D/E=23-91"/>
</dbReference>
<dbReference type="PDB" id="4ZKB">
    <property type="method" value="X-ray"/>
    <property type="resolution" value="2.90 A"/>
    <property type="chains" value="B=24-92"/>
</dbReference>
<dbReference type="PDB" id="5COR">
    <property type="method" value="X-ray"/>
    <property type="resolution" value="2.55 A"/>
    <property type="chains" value="A/B/C/D/E/F/G/H/I/J=23-92"/>
</dbReference>
<dbReference type="PDB" id="5D65">
    <property type="method" value="X-ray"/>
    <property type="resolution" value="3.10 A"/>
    <property type="chains" value="A/B/C/D/E=23-92"/>
</dbReference>
<dbReference type="PDB" id="7F1Q">
    <property type="method" value="EM"/>
    <property type="resolution" value="2.90 A"/>
    <property type="chains" value="R=24-92"/>
</dbReference>
<dbReference type="PDB" id="7F1T">
    <property type="method" value="X-ray"/>
    <property type="resolution" value="2.60 A"/>
    <property type="chains" value="A=24-92"/>
</dbReference>
<dbReference type="PDBsum" id="1B50"/>
<dbReference type="PDBsum" id="1B53"/>
<dbReference type="PDBsum" id="2X69"/>
<dbReference type="PDBsum" id="2X6G"/>
<dbReference type="PDBsum" id="3FPU"/>
<dbReference type="PDBsum" id="3H44"/>
<dbReference type="PDBsum" id="3KBX"/>
<dbReference type="PDBsum" id="4RA8"/>
<dbReference type="PDBsum" id="4ZKB"/>
<dbReference type="PDBsum" id="5COR"/>
<dbReference type="PDBsum" id="5D65"/>
<dbReference type="PDBsum" id="7F1Q"/>
<dbReference type="PDBsum" id="7F1T"/>
<dbReference type="SMR" id="P10147"/>
<dbReference type="BioGRID" id="112252">
    <property type="interactions" value="207"/>
</dbReference>
<dbReference type="DIP" id="DIP-5837N"/>
<dbReference type="FunCoup" id="P10147">
    <property type="interactions" value="690"/>
</dbReference>
<dbReference type="IntAct" id="P10147">
    <property type="interactions" value="165"/>
</dbReference>
<dbReference type="MINT" id="P10147"/>
<dbReference type="STRING" id="9606.ENSP00000477908"/>
<dbReference type="BindingDB" id="P10147"/>
<dbReference type="DrugBank" id="DB05364">
    <property type="generic name" value="ROX-888"/>
</dbReference>
<dbReference type="GlyGen" id="P10147">
    <property type="glycosylation" value="1 site"/>
</dbReference>
<dbReference type="BioMuta" id="CCL3"/>
<dbReference type="DMDM" id="127078"/>
<dbReference type="MassIVE" id="P10147"/>
<dbReference type="PaxDb" id="9606-ENSP00000477908"/>
<dbReference type="PeptideAtlas" id="P10147"/>
<dbReference type="ProteomicsDB" id="52572"/>
<dbReference type="Pumba" id="P10147"/>
<dbReference type="ABCD" id="P10147">
    <property type="antibodies" value="17 sequenced antibodies"/>
</dbReference>
<dbReference type="Antibodypedia" id="72661">
    <property type="antibodies" value="983 antibodies from 42 providers"/>
</dbReference>
<dbReference type="DNASU" id="6348"/>
<dbReference type="Ensembl" id="ENST00000613396.2">
    <property type="protein sequence ID" value="ENSP00000480753.1"/>
    <property type="gene ID" value="ENSG00000278567.2"/>
</dbReference>
<dbReference type="Ensembl" id="ENST00000613922.2">
    <property type="protein sequence ID" value="ENSP00000477908.1"/>
    <property type="gene ID" value="ENSG00000277632.2"/>
</dbReference>
<dbReference type="Ensembl" id="ENST00000616221.2">
    <property type="protein sequence ID" value="ENSP00000483712.1"/>
    <property type="gene ID" value="ENSG00000274221.2"/>
</dbReference>
<dbReference type="GeneID" id="6348"/>
<dbReference type="KEGG" id="hsa:6348"/>
<dbReference type="MANE-Select" id="ENST00000613922.2">
    <property type="protein sequence ID" value="ENSP00000477908.1"/>
    <property type="RefSeq nucleotide sequence ID" value="NM_002983.3"/>
    <property type="RefSeq protein sequence ID" value="NP_002974.1"/>
</dbReference>
<dbReference type="UCSC" id="uc002hkv.5">
    <property type="organism name" value="human"/>
</dbReference>
<dbReference type="AGR" id="HGNC:10627"/>
<dbReference type="CTD" id="6348"/>
<dbReference type="DisGeNET" id="6348"/>
<dbReference type="GeneCards" id="CCL3"/>
<dbReference type="HGNC" id="HGNC:10627">
    <property type="gene designation" value="CCL3"/>
</dbReference>
<dbReference type="HPA" id="ENSG00000277632">
    <property type="expression patterns" value="Tissue enhanced (bone marrow, lung, lymphoid tissue)"/>
</dbReference>
<dbReference type="MalaCards" id="CCL3"/>
<dbReference type="MIM" id="182283">
    <property type="type" value="gene"/>
</dbReference>
<dbReference type="neXtProt" id="NX_P10147"/>
<dbReference type="OpenTargets" id="ENSG00000277632"/>
<dbReference type="PharmGKB" id="PA35559"/>
<dbReference type="VEuPathDB" id="HostDB:ENSG00000277632"/>
<dbReference type="eggNOG" id="ENOG502SAF0">
    <property type="taxonomic scope" value="Eukaryota"/>
</dbReference>
<dbReference type="GeneTree" id="ENSGT01100000263482"/>
<dbReference type="HOGENOM" id="CLU_141716_4_0_1"/>
<dbReference type="InParanoid" id="P10147"/>
<dbReference type="OMA" id="NTPADCC"/>
<dbReference type="OrthoDB" id="8934837at2759"/>
<dbReference type="PAN-GO" id="P10147">
    <property type="GO annotations" value="14 GO annotations based on evolutionary models"/>
</dbReference>
<dbReference type="PhylomeDB" id="P10147"/>
<dbReference type="TreeFam" id="TF334888"/>
<dbReference type="PathwayCommons" id="P10147"/>
<dbReference type="Reactome" id="R-HSA-380108">
    <property type="pathway name" value="Chemokine receptors bind chemokines"/>
</dbReference>
<dbReference type="Reactome" id="R-HSA-6783783">
    <property type="pathway name" value="Interleukin-10 signaling"/>
</dbReference>
<dbReference type="SignaLink" id="P10147"/>
<dbReference type="SIGNOR" id="P10147"/>
<dbReference type="BioGRID-ORCS" id="6348">
    <property type="hits" value="8 hits in 1061 CRISPR screens"/>
</dbReference>
<dbReference type="ChiTaRS" id="CCL3">
    <property type="organism name" value="human"/>
</dbReference>
<dbReference type="EvolutionaryTrace" id="P10147"/>
<dbReference type="GeneWiki" id="CCL3"/>
<dbReference type="GenomeRNAi" id="6348"/>
<dbReference type="Pharos" id="P10147">
    <property type="development level" value="Tbio"/>
</dbReference>
<dbReference type="PRO" id="PR:P10147"/>
<dbReference type="Proteomes" id="UP000005640">
    <property type="component" value="Chromosome 17"/>
</dbReference>
<dbReference type="RNAct" id="P10147">
    <property type="molecule type" value="protein"/>
</dbReference>
<dbReference type="Bgee" id="ENSG00000277632">
    <property type="expression patterns" value="Expressed in bone marrow and 105 other cell types or tissues"/>
</dbReference>
<dbReference type="ExpressionAtlas" id="P10147">
    <property type="expression patterns" value="baseline and differential"/>
</dbReference>
<dbReference type="GO" id="GO:0005737">
    <property type="term" value="C:cytoplasm"/>
    <property type="evidence" value="ECO:0000314"/>
    <property type="project" value="UniProtKB"/>
</dbReference>
<dbReference type="GO" id="GO:0005829">
    <property type="term" value="C:cytosol"/>
    <property type="evidence" value="ECO:0000314"/>
    <property type="project" value="UniProtKB"/>
</dbReference>
<dbReference type="GO" id="GO:0005576">
    <property type="term" value="C:extracellular region"/>
    <property type="evidence" value="ECO:0000314"/>
    <property type="project" value="BHF-UCL"/>
</dbReference>
<dbReference type="GO" id="GO:0005615">
    <property type="term" value="C:extracellular space"/>
    <property type="evidence" value="ECO:0000314"/>
    <property type="project" value="UniProtKB"/>
</dbReference>
<dbReference type="GO" id="GO:0048020">
    <property type="term" value="F:CCR chemokine receptor binding"/>
    <property type="evidence" value="ECO:0000318"/>
    <property type="project" value="GO_Central"/>
</dbReference>
<dbReference type="GO" id="GO:0031726">
    <property type="term" value="F:CCR1 chemokine receptor binding"/>
    <property type="evidence" value="ECO:0000353"/>
    <property type="project" value="UniProtKB"/>
</dbReference>
<dbReference type="GO" id="GO:0031730">
    <property type="term" value="F:CCR5 chemokine receptor binding"/>
    <property type="evidence" value="ECO:0000353"/>
    <property type="project" value="UniProtKB"/>
</dbReference>
<dbReference type="GO" id="GO:0042056">
    <property type="term" value="F:chemoattractant activity"/>
    <property type="evidence" value="ECO:0000314"/>
    <property type="project" value="UniProtKB"/>
</dbReference>
<dbReference type="GO" id="GO:0008009">
    <property type="term" value="F:chemokine activity"/>
    <property type="evidence" value="ECO:0000314"/>
    <property type="project" value="UniProtKB"/>
</dbReference>
<dbReference type="GO" id="GO:0042802">
    <property type="term" value="F:identical protein binding"/>
    <property type="evidence" value="ECO:0000353"/>
    <property type="project" value="IntAct"/>
</dbReference>
<dbReference type="GO" id="GO:0016301">
    <property type="term" value="F:kinase activity"/>
    <property type="evidence" value="ECO:0000314"/>
    <property type="project" value="UniProtKB"/>
</dbReference>
<dbReference type="GO" id="GO:0016004">
    <property type="term" value="F:phospholipase activator activity"/>
    <property type="evidence" value="ECO:0000314"/>
    <property type="project" value="UniProtKB"/>
</dbReference>
<dbReference type="GO" id="GO:0004672">
    <property type="term" value="F:protein kinase activity"/>
    <property type="evidence" value="ECO:0000314"/>
    <property type="project" value="UniProtKB"/>
</dbReference>
<dbReference type="GO" id="GO:0061844">
    <property type="term" value="P:antimicrobial humoral immune response mediated by antimicrobial peptide"/>
    <property type="evidence" value="ECO:0000318"/>
    <property type="project" value="GO_Central"/>
</dbReference>
<dbReference type="GO" id="GO:0043615">
    <property type="term" value="P:astrocyte cell migration"/>
    <property type="evidence" value="ECO:0000250"/>
    <property type="project" value="UniProtKB"/>
</dbReference>
<dbReference type="GO" id="GO:0006816">
    <property type="term" value="P:calcium ion transport"/>
    <property type="evidence" value="ECO:0000314"/>
    <property type="project" value="UniProtKB"/>
</dbReference>
<dbReference type="GO" id="GO:0019722">
    <property type="term" value="P:calcium-mediated signaling"/>
    <property type="evidence" value="ECO:0000314"/>
    <property type="project" value="UniProtKB"/>
</dbReference>
<dbReference type="GO" id="GO:0001775">
    <property type="term" value="P:cell activation"/>
    <property type="evidence" value="ECO:0000314"/>
    <property type="project" value="UniProtKB"/>
</dbReference>
<dbReference type="GO" id="GO:0060326">
    <property type="term" value="P:cell chemotaxis"/>
    <property type="evidence" value="ECO:0000318"/>
    <property type="project" value="GO_Central"/>
</dbReference>
<dbReference type="GO" id="GO:0007267">
    <property type="term" value="P:cell-cell signaling"/>
    <property type="evidence" value="ECO:0000314"/>
    <property type="project" value="UniProtKB"/>
</dbReference>
<dbReference type="GO" id="GO:0071347">
    <property type="term" value="P:cellular response to interleukin-1"/>
    <property type="evidence" value="ECO:0000270"/>
    <property type="project" value="UniProtKB"/>
</dbReference>
<dbReference type="GO" id="GO:0071356">
    <property type="term" value="P:cellular response to tumor necrosis factor"/>
    <property type="evidence" value="ECO:0000270"/>
    <property type="project" value="UniProtKB"/>
</dbReference>
<dbReference type="GO" id="GO:0071346">
    <property type="term" value="P:cellular response to type II interferon"/>
    <property type="evidence" value="ECO:0000270"/>
    <property type="project" value="UniProtKB"/>
</dbReference>
<dbReference type="GO" id="GO:0070098">
    <property type="term" value="P:chemokine-mediated signaling pathway"/>
    <property type="evidence" value="ECO:0000318"/>
    <property type="project" value="GO_Central"/>
</dbReference>
<dbReference type="GO" id="GO:0006935">
    <property type="term" value="P:chemotaxis"/>
    <property type="evidence" value="ECO:0000314"/>
    <property type="project" value="UniProtKB"/>
</dbReference>
<dbReference type="GO" id="GO:0007010">
    <property type="term" value="P:cytoskeleton organization"/>
    <property type="evidence" value="ECO:0000314"/>
    <property type="project" value="UniProtKB"/>
</dbReference>
<dbReference type="GO" id="GO:0048245">
    <property type="term" value="P:eosinophil chemotaxis"/>
    <property type="evidence" value="ECO:0000314"/>
    <property type="project" value="UniProtKB"/>
</dbReference>
<dbReference type="GO" id="GO:0043308">
    <property type="term" value="P:eosinophil degranulation"/>
    <property type="evidence" value="ECO:0000314"/>
    <property type="project" value="UniProtKB"/>
</dbReference>
<dbReference type="GO" id="GO:0006887">
    <property type="term" value="P:exocytosis"/>
    <property type="evidence" value="ECO:0000314"/>
    <property type="project" value="UniProtKB"/>
</dbReference>
<dbReference type="GO" id="GO:0071621">
    <property type="term" value="P:granulocyte chemotaxis"/>
    <property type="evidence" value="ECO:0000314"/>
    <property type="project" value="UniProtKB"/>
</dbReference>
<dbReference type="GO" id="GO:0006954">
    <property type="term" value="P:inflammatory response"/>
    <property type="evidence" value="ECO:0000314"/>
    <property type="project" value="UniProtKB"/>
</dbReference>
<dbReference type="GO" id="GO:0006874">
    <property type="term" value="P:intracellular calcium ion homeostasis"/>
    <property type="evidence" value="ECO:0000314"/>
    <property type="project" value="UniProtKB"/>
</dbReference>
<dbReference type="GO" id="GO:0048247">
    <property type="term" value="P:lymphocyte chemotaxis"/>
    <property type="evidence" value="ECO:0000314"/>
    <property type="project" value="UniProtKB"/>
</dbReference>
<dbReference type="GO" id="GO:0048246">
    <property type="term" value="P:macrophage chemotaxis"/>
    <property type="evidence" value="ECO:0000250"/>
    <property type="project" value="UniProtKB"/>
</dbReference>
<dbReference type="GO" id="GO:0000165">
    <property type="term" value="P:MAPK cascade"/>
    <property type="evidence" value="ECO:0000270"/>
    <property type="project" value="UniProtKB"/>
</dbReference>
<dbReference type="GO" id="GO:0002548">
    <property type="term" value="P:monocyte chemotaxis"/>
    <property type="evidence" value="ECO:0000314"/>
    <property type="project" value="UniProtKB"/>
</dbReference>
<dbReference type="GO" id="GO:0043922">
    <property type="term" value="P:negative regulation by host of viral transcription"/>
    <property type="evidence" value="ECO:0000314"/>
    <property type="project" value="UniProtKB"/>
</dbReference>
<dbReference type="GO" id="GO:0030502">
    <property type="term" value="P:negative regulation of bone mineralization"/>
    <property type="evidence" value="ECO:0000314"/>
    <property type="project" value="UniProtKB"/>
</dbReference>
<dbReference type="GO" id="GO:0010629">
    <property type="term" value="P:negative regulation of gene expression"/>
    <property type="evidence" value="ECO:0000314"/>
    <property type="project" value="UniProtKB"/>
</dbReference>
<dbReference type="GO" id="GO:0045671">
    <property type="term" value="P:negative regulation of osteoclast differentiation"/>
    <property type="evidence" value="ECO:0000314"/>
    <property type="project" value="UniProtKB"/>
</dbReference>
<dbReference type="GO" id="GO:0030593">
    <property type="term" value="P:neutrophil chemotaxis"/>
    <property type="evidence" value="ECO:0000314"/>
    <property type="project" value="UniProtKB"/>
</dbReference>
<dbReference type="GO" id="GO:0001649">
    <property type="term" value="P:osteoblast differentiation"/>
    <property type="evidence" value="ECO:0000270"/>
    <property type="project" value="UniProtKB"/>
</dbReference>
<dbReference type="GO" id="GO:0090280">
    <property type="term" value="P:positive regulation of calcium ion import"/>
    <property type="evidence" value="ECO:0000304"/>
    <property type="project" value="BHF-UCL"/>
</dbReference>
<dbReference type="GO" id="GO:0051928">
    <property type="term" value="P:positive regulation of calcium ion transport"/>
    <property type="evidence" value="ECO:0000314"/>
    <property type="project" value="UniProtKB"/>
</dbReference>
<dbReference type="GO" id="GO:0050850">
    <property type="term" value="P:positive regulation of calcium-mediated signaling"/>
    <property type="evidence" value="ECO:0000315"/>
    <property type="project" value="UniProtKB"/>
</dbReference>
<dbReference type="GO" id="GO:0030335">
    <property type="term" value="P:positive regulation of cell migration"/>
    <property type="evidence" value="ECO:0000314"/>
    <property type="project" value="UniProtKB"/>
</dbReference>
<dbReference type="GO" id="GO:0070374">
    <property type="term" value="P:positive regulation of ERK1 and ERK2 cascade"/>
    <property type="evidence" value="ECO:0000314"/>
    <property type="project" value="UniProtKB"/>
</dbReference>
<dbReference type="GO" id="GO:0010628">
    <property type="term" value="P:positive regulation of gene expression"/>
    <property type="evidence" value="ECO:0000314"/>
    <property type="project" value="UniProtKB"/>
</dbReference>
<dbReference type="GO" id="GO:0050729">
    <property type="term" value="P:positive regulation of inflammatory response"/>
    <property type="evidence" value="ECO:0000250"/>
    <property type="project" value="UniProtKB"/>
</dbReference>
<dbReference type="GO" id="GO:0032731">
    <property type="term" value="P:positive regulation of interleukin-1 beta production"/>
    <property type="evidence" value="ECO:0000250"/>
    <property type="project" value="UniProtKB"/>
</dbReference>
<dbReference type="GO" id="GO:1903980">
    <property type="term" value="P:positive regulation of microglial cell activation"/>
    <property type="evidence" value="ECO:0000304"/>
    <property type="project" value="ARUK-UCL"/>
</dbReference>
<dbReference type="GO" id="GO:1904141">
    <property type="term" value="P:positive regulation of microglial cell migration"/>
    <property type="evidence" value="ECO:0000304"/>
    <property type="project" value="ARUK-UCL"/>
</dbReference>
<dbReference type="GO" id="GO:2000503">
    <property type="term" value="P:positive regulation of natural killer cell chemotaxis"/>
    <property type="evidence" value="ECO:0000314"/>
    <property type="project" value="UniProtKB"/>
</dbReference>
<dbReference type="GO" id="GO:0043525">
    <property type="term" value="P:positive regulation of neuron apoptotic process"/>
    <property type="evidence" value="ECO:0000250"/>
    <property type="project" value="UniProtKB"/>
</dbReference>
<dbReference type="GO" id="GO:0051897">
    <property type="term" value="P:positive regulation of phosphatidylinositol 3-kinase/protein kinase B signal transduction"/>
    <property type="evidence" value="ECO:0000270"/>
    <property type="project" value="UniProtKB"/>
</dbReference>
<dbReference type="GO" id="GO:0032760">
    <property type="term" value="P:positive regulation of tumor necrosis factor production"/>
    <property type="evidence" value="ECO:0000250"/>
    <property type="project" value="UniProtKB"/>
</dbReference>
<dbReference type="GO" id="GO:0050795">
    <property type="term" value="P:regulation of behavior"/>
    <property type="evidence" value="ECO:0000314"/>
    <property type="project" value="UniProtKB"/>
</dbReference>
<dbReference type="GO" id="GO:0008360">
    <property type="term" value="P:regulation of cell shape"/>
    <property type="evidence" value="ECO:0000314"/>
    <property type="project" value="UniProtKB"/>
</dbReference>
<dbReference type="GO" id="GO:0051930">
    <property type="term" value="P:regulation of sensory perception of pain"/>
    <property type="evidence" value="ECO:0000314"/>
    <property type="project" value="UniProtKB"/>
</dbReference>
<dbReference type="GO" id="GO:0014808">
    <property type="term" value="P:release of sequestered calcium ion into cytosol by sarcoplasmic reticulum"/>
    <property type="evidence" value="ECO:0000314"/>
    <property type="project" value="UniProtKB"/>
</dbReference>
<dbReference type="GO" id="GO:0070723">
    <property type="term" value="P:response to cholesterol"/>
    <property type="evidence" value="ECO:0000314"/>
    <property type="project" value="UniProtKB"/>
</dbReference>
<dbReference type="GO" id="GO:0009636">
    <property type="term" value="P:response to toxic substance"/>
    <property type="evidence" value="ECO:0000314"/>
    <property type="project" value="UniProtKB"/>
</dbReference>
<dbReference type="GO" id="GO:0023052">
    <property type="term" value="P:signaling"/>
    <property type="evidence" value="ECO:0000270"/>
    <property type="project" value="UniProtKB"/>
</dbReference>
<dbReference type="GO" id="GO:0010818">
    <property type="term" value="P:T cell chemotaxis"/>
    <property type="evidence" value="ECO:0000314"/>
    <property type="project" value="UniProtKB"/>
</dbReference>
<dbReference type="CDD" id="cd00272">
    <property type="entry name" value="Chemokine_CC"/>
    <property type="match status" value="1"/>
</dbReference>
<dbReference type="FunFam" id="2.40.50.40:FF:000002">
    <property type="entry name" value="C-C motif chemokine"/>
    <property type="match status" value="1"/>
</dbReference>
<dbReference type="Gene3D" id="2.40.50.40">
    <property type="match status" value="1"/>
</dbReference>
<dbReference type="InterPro" id="IPR039809">
    <property type="entry name" value="Chemokine_b/g/d"/>
</dbReference>
<dbReference type="InterPro" id="IPR000827">
    <property type="entry name" value="Chemokine_CC_CS"/>
</dbReference>
<dbReference type="InterPro" id="IPR001811">
    <property type="entry name" value="Chemokine_IL8-like_dom"/>
</dbReference>
<dbReference type="InterPro" id="IPR036048">
    <property type="entry name" value="Interleukin_8-like_sf"/>
</dbReference>
<dbReference type="PANTHER" id="PTHR12015:SF183">
    <property type="entry name" value="C-C MOTIF CHEMOKINE 3"/>
    <property type="match status" value="1"/>
</dbReference>
<dbReference type="PANTHER" id="PTHR12015">
    <property type="entry name" value="SMALL INDUCIBLE CYTOKINE A"/>
    <property type="match status" value="1"/>
</dbReference>
<dbReference type="Pfam" id="PF00048">
    <property type="entry name" value="IL8"/>
    <property type="match status" value="1"/>
</dbReference>
<dbReference type="SMART" id="SM00199">
    <property type="entry name" value="SCY"/>
    <property type="match status" value="1"/>
</dbReference>
<dbReference type="SUPFAM" id="SSF54117">
    <property type="entry name" value="Interleukin 8-like chemokines"/>
    <property type="match status" value="1"/>
</dbReference>
<dbReference type="PROSITE" id="PS00472">
    <property type="entry name" value="SMALL_CYTOKINES_CC"/>
    <property type="match status" value="1"/>
</dbReference>
<accession>P10147</accession>
<comment type="function">
    <text evidence="3 5">Monokine with inflammatory and chemokinetic properties. Binds to CCR1, CCR4 and CCR5. One of the major HIV-suppressive factors produced by CD8+ T-cells. Recombinant MIP-1-alpha induces a dose-dependent inhibition of different strains of HIV-1, HIV-2, and simian immunodeficiency virus (SIV).</text>
</comment>
<comment type="subunit">
    <text evidence="2 3">Self-associates. Also heterodimer of MIP-1-alpha(4-69) and MIP-1-beta(3-69) (PubMed:12070155). Interacts with CCR1 (PubMed:15905581).</text>
</comment>
<comment type="interaction">
    <interactant intactId="EBI-8459634">
        <id>P10147</id>
    </interactant>
    <interactant intactId="EBI-8459634">
        <id>P10147</id>
        <label>CCL3</label>
    </interactant>
    <organismsDiffer>false</organismsDiffer>
    <experiments>3</experiments>
</comment>
<comment type="interaction">
    <interactant intactId="EBI-8459634">
        <id>P10147</id>
    </interactant>
    <interactant intactId="EBI-2556886">
        <id>P14735</id>
        <label>IDE</label>
    </interactant>
    <organismsDiffer>false</organismsDiffer>
    <experiments>3</experiments>
</comment>
<comment type="interaction">
    <interactant intactId="EBI-8459634">
        <id>P10147</id>
    </interactant>
    <interactant intactId="EBI-741480">
        <id>Q9UMX0</id>
        <label>UBQLN1</label>
    </interactant>
    <organismsDiffer>false</organismsDiffer>
    <experiments>3</experiments>
</comment>
<comment type="interaction">
    <interactant intactId="EBI-8459634">
        <id>P10147</id>
    </interactant>
    <interactant intactId="EBI-947187">
        <id>Q9UHD9</id>
        <label>UBQLN2</label>
    </interactant>
    <organismsDiffer>false</organismsDiffer>
    <experiments>3</experiments>
</comment>
<comment type="interaction">
    <interactant intactId="EBI-8459634">
        <id>P10147</id>
    </interactant>
    <interactant intactId="EBI-16161937">
        <id>Q2F862</id>
    </interactant>
    <organismsDiffer>true</organismsDiffer>
    <experiments>2</experiments>
</comment>
<comment type="subcellular location">
    <subcellularLocation>
        <location>Secreted</location>
    </subcellularLocation>
</comment>
<comment type="induction">
    <text>By TPA or PHA (TPA = 12-O-tetradecanoyl phorbol-13 acetate (tumor promoter); PHA = phytohemagglutinin (T-cell mitogen)).</text>
</comment>
<comment type="PTM">
    <text>N-terminal processed form LD78-alpha(4-69) is produced by proteolytic cleavage after secretion from HTLV1-transformed T-cells.</text>
</comment>
<comment type="similarity">
    <text evidence="8">Belongs to the intercrine beta (chemokine CC) family.</text>
</comment>
<comment type="online information" name="Wikipedia">
    <link uri="https://en.wikipedia.org/wiki/Macrophage_Inflammatory_Protein"/>
    <text>Macrophage inflammatory protein entry</text>
</comment>
<organism>
    <name type="scientific">Homo sapiens</name>
    <name type="common">Human</name>
    <dbReference type="NCBI Taxonomy" id="9606"/>
    <lineage>
        <taxon>Eukaryota</taxon>
        <taxon>Metazoa</taxon>
        <taxon>Chordata</taxon>
        <taxon>Craniata</taxon>
        <taxon>Vertebrata</taxon>
        <taxon>Euteleostomi</taxon>
        <taxon>Mammalia</taxon>
        <taxon>Eutheria</taxon>
        <taxon>Euarchontoglires</taxon>
        <taxon>Primates</taxon>
        <taxon>Haplorrhini</taxon>
        <taxon>Catarrhini</taxon>
        <taxon>Hominidae</taxon>
        <taxon>Homo</taxon>
    </lineage>
</organism>
<proteinExistence type="evidence at protein level"/>
<gene>
    <name type="primary">CCL3</name>
    <name type="synonym">G0S19-1</name>
    <name type="synonym">MIP1A</name>
    <name type="synonym">SCYA3</name>
</gene>
<sequence length="92" mass="10085">MQVSTAALAVLLCTMALCNQFSASLAADTPTACCFSYTSRQIPQNFIADYFETSSQCSKPGVIFLTKRSRQVCADPSEEWVQKYVSDLELSA</sequence>
<protein>
    <recommendedName>
        <fullName>C-C motif chemokine 3</fullName>
    </recommendedName>
    <alternativeName>
        <fullName>G0/G1 switch regulatory protein 19-1</fullName>
    </alternativeName>
    <alternativeName>
        <fullName>Macrophage inflammatory protein 1-alpha</fullName>
        <shortName>MIP-1-alpha</shortName>
    </alternativeName>
    <alternativeName>
        <fullName>PAT 464.1</fullName>
    </alternativeName>
    <alternativeName>
        <fullName>SIS-beta</fullName>
    </alternativeName>
    <alternativeName>
        <fullName>Small-inducible cytokine A3</fullName>
    </alternativeName>
    <alternativeName>
        <fullName>Tonsillar lymphocyte LD78 alpha protein</fullName>
    </alternativeName>
    <component>
        <recommendedName>
            <fullName>MIP-1-alpha(4-69)</fullName>
        </recommendedName>
        <alternativeName>
            <fullName>LD78-alpha(4-69)</fullName>
        </alternativeName>
    </component>
</protein>
<reference key="1">
    <citation type="journal article" date="1986" name="J. Biochem.">
        <title>A cDNA clone used to study mRNA inducible in human tonsillar lymphocytes by a tumor promoter.</title>
        <authorList>
            <person name="Obaru K."/>
            <person name="Fukuda M."/>
            <person name="Maeda S."/>
            <person name="Shimada K."/>
        </authorList>
    </citation>
    <scope>NUCLEOTIDE SEQUENCE [GENOMIC DNA / MRNA]</scope>
    <source>
        <tissue>Lymphocyte</tissue>
    </source>
</reference>
<reference key="2">
    <citation type="journal article" date="1989" name="J. Immunol.">
        <title>Mitogenic activation of human T cells induces two closely related genes which share structural similarities with a new family of secreted factors.</title>
        <authorList>
            <person name="Zipfel P.F."/>
            <person name="Balke J."/>
            <person name="Irving S.G."/>
            <person name="Kelly K."/>
            <person name="Siebenlist U."/>
        </authorList>
    </citation>
    <scope>NUCLEOTIDE SEQUENCE [MRNA]</scope>
    <source>
        <tissue>T-cell</tissue>
    </source>
</reference>
<reference key="3">
    <citation type="journal article" date="1990" name="DNA Cell Biol.">
        <title>Three human homologs of a murine gene encoding an inhibitor of stem cell proliferation.</title>
        <authorList>
            <person name="Blum S."/>
            <person name="Forsdyke R.E."/>
            <person name="Forsdyke D.R."/>
        </authorList>
    </citation>
    <scope>NUCLEOTIDE SEQUENCE [GENOMIC DNA / MRNA]</scope>
    <source>
        <tissue>Lymphocyte</tissue>
    </source>
</reference>
<reference key="4">
    <citation type="journal article" date="1990" name="Mol. Cell. Biol.">
        <title>Structures of human genes coding for cytokine LD78 and their expression.</title>
        <authorList>
            <person name="Nakao M."/>
            <person name="Nomiyama H."/>
            <person name="Shimada K."/>
        </authorList>
    </citation>
    <scope>NUCLEOTIDE SEQUENCE [GENOMIC DNA]</scope>
    <source>
        <tissue>Lymphocyte</tissue>
    </source>
</reference>
<reference key="5">
    <citation type="journal article" date="2004" name="Genome Res.">
        <title>The status, quality, and expansion of the NIH full-length cDNA project: the Mammalian Gene Collection (MGC).</title>
        <authorList>
            <consortium name="The MGC Project Team"/>
        </authorList>
    </citation>
    <scope>NUCLEOTIDE SEQUENCE [LARGE SCALE MRNA]</scope>
    <source>
        <tissue>Natural killer cell</tissue>
    </source>
</reference>
<reference key="6">
    <citation type="submission" date="1998-01" db="EMBL/GenBank/DDBJ databases">
        <authorList>
            <person name="Jang J.S."/>
            <person name="Kim B.E."/>
        </authorList>
    </citation>
    <scope>NUCLEOTIDE SEQUENCE [MRNA] OF 23-92</scope>
    <source>
        <tissue>Leukocyte</tissue>
    </source>
</reference>
<reference key="7">
    <citation type="journal article" date="1995" name="Blood">
        <title>BB-10010: an active variant of human macrophage inflammatory protein-1 alpha with improved pharmaceutical properties.</title>
        <authorList>
            <person name="Hunter M.G."/>
            <person name="Bawden L."/>
            <person name="Brotherton D."/>
            <person name="Craig S."/>
            <person name="Cribbes S."/>
            <person name="Czaplewski L.G."/>
            <person name="Dexter T.M."/>
            <person name="Drummond A.H."/>
            <person name="Gearing A.H."/>
            <person name="Heyworth C.M."/>
            <person name="Lord B.I."/>
            <person name="Mccourt M."/>
            <person name="Varley P.G."/>
            <person name="Wood L.M."/>
            <person name="Edwards R.M."/>
            <person name="Lewis P.J."/>
        </authorList>
    </citation>
    <scope>PROTEIN SEQUENCE OF 24-92</scope>
    <scope>MUTAGENESIS OF ASP-49</scope>
</reference>
<reference key="8">
    <citation type="journal article" date="1995" name="Science">
        <title>Identification of RANTES, MIP-1 alpha, and MIP-1 beta as the major HIV-suppressive factors produced by CD8+ T cells.</title>
        <authorList>
            <person name="Cocchi F."/>
            <person name="DeVico A.L."/>
            <person name="Garzino-Demo A."/>
            <person name="Arya S.K."/>
            <person name="Gallo R.C."/>
            <person name="Lusso P."/>
        </authorList>
    </citation>
    <scope>PROTEIN SEQUENCE OF 27-40 AND 71-83</scope>
    <scope>FUNCTION</scope>
</reference>
<reference key="9">
    <citation type="journal article" date="1995" name="AIDS Res. Hum. Retroviruses">
        <title>Identification of MIP-1 alpha/LD78 as a monocyte chemoattractant released by the HTLV-I-transformed cell line MT4.</title>
        <authorList>
            <person name="Bertini R."/>
            <person name="Luini W."/>
            <person name="Sozzani S."/>
            <person name="Bottazzi B."/>
            <person name="Ruggiero P."/>
            <person name="Boraschi D."/>
            <person name="Saggioro D."/>
            <person name="Chieco-Bianchi L."/>
            <person name="Proost P."/>
            <person name="van Damme J."/>
            <person name="Mantovani A."/>
        </authorList>
    </citation>
    <scope>PROTEIN SEQUENCE OF 27-51</scope>
    <scope>IDENTIFICATION OF LD78-ALPHA(4-69)</scope>
</reference>
<reference key="10">
    <citation type="journal article" date="1997" name="J. Biol. Chem.">
        <title>Identification of a glycosaminoglycan-binding site in chemokine macrophage inflammatory protein-1alpha.</title>
        <authorList>
            <person name="Koopmann W."/>
            <person name="Krangel M.S."/>
        </authorList>
    </citation>
    <scope>GAG BINDING SITES ARG-40; ARG-68 AND ARG-70</scope>
    <scope>MUTAGENESIS OF ARG-40; ARG-68 AND ARG-70</scope>
</reference>
<reference key="11">
    <citation type="journal article" date="2002" name="J. Biol. Chem.">
        <title>Natural truncation of the chemokine MIP-1beta/CCL4 affects receptor specificity but not anti-HIV-1 activity.</title>
        <authorList>
            <person name="Guan E."/>
            <person name="Wang J."/>
            <person name="Roderiquez G."/>
            <person name="Norcross M.A."/>
        </authorList>
    </citation>
    <scope>SUBUNIT</scope>
    <scope>INTERACTION WITH MIP-1-BETA(3-69)</scope>
</reference>
<reference key="12">
    <citation type="journal article" date="2002" name="Cytokine Growth Factor Rev.">
        <title>Macrophage inflammatory protein-1.</title>
        <authorList>
            <person name="Menten P."/>
            <person name="Wuyts A."/>
            <person name="Van Damme J."/>
        </authorList>
    </citation>
    <scope>REVIEW</scope>
</reference>
<reference key="13">
    <citation type="journal article" date="2005" name="J. Immunol.">
        <title>Proteolytic activation of alternative CCR1 ligands in inflammation.</title>
        <authorList>
            <person name="Berahovich R.D."/>
            <person name="Miao Z."/>
            <person name="Wang Y."/>
            <person name="Premack B."/>
            <person name="Howard M.C."/>
            <person name="Schall T.J."/>
        </authorList>
    </citation>
    <scope>FUNCTION</scope>
    <scope>INTERACTION WITH CCR1</scope>
</reference>
<reference key="14">
    <citation type="journal article" date="1999" name="J. Biol. Chem.">
        <title>Identification of amino acid residues critical for aggregation of human CC chemokines macrophage inflammatory protein (MIP)-1alpha, MIP-1beta, and RANTES. Characterization of active disaggregated chemokine variants.</title>
        <authorList>
            <person name="Czaplewski L.G."/>
            <person name="McKeating J."/>
            <person name="Craven C.J."/>
            <person name="Higgins L.D."/>
            <person name="Appay V."/>
            <person name="Brown A."/>
            <person name="Dudgeon T."/>
            <person name="Howard L.A."/>
            <person name="Meyers T."/>
            <person name="Owen J."/>
            <person name="Palan S.R."/>
            <person name="Tan P."/>
            <person name="Wilson G."/>
            <person name="Woods N.R."/>
            <person name="Heyworth C.M."/>
            <person name="Lord B.I."/>
            <person name="Brotherton D."/>
            <person name="Christison R."/>
            <person name="Craig S."/>
            <person name="Cribbes S."/>
            <person name="Edwards R.M."/>
            <person name="Evans S.J."/>
            <person name="Gilbert R."/>
            <person name="Morgan P."/>
            <person name="Eliot Randle E."/>
            <person name="Schofield N."/>
            <person name="Varley P.G."/>
            <person name="Fisher J."/>
            <person name="Jonathan P."/>
            <person name="Waltho J.P."/>
            <person name="Hunter M.G."/>
        </authorList>
    </citation>
    <scope>STRUCTURE BY NMR OF 24-92</scope>
    <scope>MUTAGENESIS OF ASP-49 AND GLU-89</scope>
</reference>
<reference evidence="9" key="15">
    <citation type="journal article" date="2009" name="PLoS ONE">
        <title>Structural basis of chemokine sequestration by a tick chemokine binding protein: the crystal structure of the complex between Evasin-1 and CCL3.</title>
        <authorList>
            <person name="Dias J.M."/>
            <person name="Losberger C."/>
            <person name="Deruaz M."/>
            <person name="Power C.A."/>
            <person name="Proudfoot A.E."/>
            <person name="Shaw J.P."/>
        </authorList>
    </citation>
    <scope>X-RAY CRYSTALLOGRAPHY (1.76 ANGSTROMS) OF 24-92 IN COMPLEX WITH TICK EVASIN-1</scope>
    <scope>DISULFIDE BONDS</scope>
</reference>
<keyword id="KW-0002">3D-structure</keyword>
<keyword id="KW-0145">Chemotaxis</keyword>
<keyword id="KW-0202">Cytokine</keyword>
<keyword id="KW-0903">Direct protein sequencing</keyword>
<keyword id="KW-1015">Disulfide bond</keyword>
<keyword id="KW-0395">Inflammatory response</keyword>
<keyword id="KW-1267">Proteomics identification</keyword>
<keyword id="KW-1185">Reference proteome</keyword>
<keyword id="KW-0964">Secreted</keyword>
<keyword id="KW-0732">Signal</keyword>
<evidence type="ECO:0000269" key="1">
    <source>
    </source>
</evidence>
<evidence type="ECO:0000269" key="2">
    <source>
    </source>
</evidence>
<evidence type="ECO:0000269" key="3">
    <source>
    </source>
</evidence>
<evidence type="ECO:0000269" key="4">
    <source>
    </source>
</evidence>
<evidence type="ECO:0000269" key="5">
    <source>
    </source>
</evidence>
<evidence type="ECO:0000269" key="6">
    <source>
    </source>
</evidence>
<evidence type="ECO:0000269" key="7">
    <source>
    </source>
</evidence>
<evidence type="ECO:0000305" key="8"/>
<evidence type="ECO:0007744" key="9">
    <source>
        <dbReference type="PDB" id="3FPU"/>
    </source>
</evidence>
<evidence type="ECO:0007829" key="10">
    <source>
        <dbReference type="PDB" id="2X6G"/>
    </source>
</evidence>
<evidence type="ECO:0007829" key="11">
    <source>
        <dbReference type="PDB" id="3FPU"/>
    </source>
</evidence>
<evidence type="ECO:0007829" key="12">
    <source>
        <dbReference type="PDB" id="4ZKB"/>
    </source>
</evidence>
<evidence type="ECO:0007829" key="13">
    <source>
        <dbReference type="PDB" id="7F1Q"/>
    </source>
</evidence>
<name>CCL3_HUMAN</name>